<dbReference type="EC" id="3.5.4.13" evidence="1"/>
<dbReference type="EMBL" id="CP000514">
    <property type="protein sequence ID" value="ABM18037.1"/>
    <property type="molecule type" value="Genomic_DNA"/>
</dbReference>
<dbReference type="RefSeq" id="WP_011784457.1">
    <property type="nucleotide sequence ID" value="NC_008740.1"/>
</dbReference>
<dbReference type="SMR" id="A1TZ68"/>
<dbReference type="STRING" id="351348.Maqu_0941"/>
<dbReference type="GeneID" id="94724218"/>
<dbReference type="KEGG" id="maq:Maqu_0941"/>
<dbReference type="eggNOG" id="COG0717">
    <property type="taxonomic scope" value="Bacteria"/>
</dbReference>
<dbReference type="HOGENOM" id="CLU_087476_4_0_6"/>
<dbReference type="OrthoDB" id="9780956at2"/>
<dbReference type="UniPathway" id="UPA00610">
    <property type="reaction ID" value="UER00665"/>
</dbReference>
<dbReference type="Proteomes" id="UP000000998">
    <property type="component" value="Chromosome"/>
</dbReference>
<dbReference type="GO" id="GO:0008829">
    <property type="term" value="F:dCTP deaminase activity"/>
    <property type="evidence" value="ECO:0007669"/>
    <property type="project" value="UniProtKB-UniRule"/>
</dbReference>
<dbReference type="GO" id="GO:0000166">
    <property type="term" value="F:nucleotide binding"/>
    <property type="evidence" value="ECO:0007669"/>
    <property type="project" value="UniProtKB-KW"/>
</dbReference>
<dbReference type="GO" id="GO:0006226">
    <property type="term" value="P:dUMP biosynthetic process"/>
    <property type="evidence" value="ECO:0007669"/>
    <property type="project" value="UniProtKB-UniPathway"/>
</dbReference>
<dbReference type="GO" id="GO:0006229">
    <property type="term" value="P:dUTP biosynthetic process"/>
    <property type="evidence" value="ECO:0007669"/>
    <property type="project" value="UniProtKB-UniRule"/>
</dbReference>
<dbReference type="GO" id="GO:0015949">
    <property type="term" value="P:nucleobase-containing small molecule interconversion"/>
    <property type="evidence" value="ECO:0007669"/>
    <property type="project" value="TreeGrafter"/>
</dbReference>
<dbReference type="CDD" id="cd07557">
    <property type="entry name" value="trimeric_dUTPase"/>
    <property type="match status" value="1"/>
</dbReference>
<dbReference type="FunFam" id="2.70.40.10:FF:000001">
    <property type="entry name" value="dCTP deaminase"/>
    <property type="match status" value="1"/>
</dbReference>
<dbReference type="Gene3D" id="2.70.40.10">
    <property type="match status" value="1"/>
</dbReference>
<dbReference type="HAMAP" id="MF_00146">
    <property type="entry name" value="dCTP_deaminase"/>
    <property type="match status" value="1"/>
</dbReference>
<dbReference type="InterPro" id="IPR011962">
    <property type="entry name" value="dCTP_deaminase"/>
</dbReference>
<dbReference type="InterPro" id="IPR036157">
    <property type="entry name" value="dUTPase-like_sf"/>
</dbReference>
<dbReference type="InterPro" id="IPR033704">
    <property type="entry name" value="dUTPase_trimeric"/>
</dbReference>
<dbReference type="NCBIfam" id="TIGR02274">
    <property type="entry name" value="dCTP_deam"/>
    <property type="match status" value="1"/>
</dbReference>
<dbReference type="PANTHER" id="PTHR42680">
    <property type="entry name" value="DCTP DEAMINASE"/>
    <property type="match status" value="1"/>
</dbReference>
<dbReference type="PANTHER" id="PTHR42680:SF3">
    <property type="entry name" value="DCTP DEAMINASE"/>
    <property type="match status" value="1"/>
</dbReference>
<dbReference type="Pfam" id="PF22769">
    <property type="entry name" value="DCD"/>
    <property type="match status" value="1"/>
</dbReference>
<dbReference type="SUPFAM" id="SSF51283">
    <property type="entry name" value="dUTPase-like"/>
    <property type="match status" value="1"/>
</dbReference>
<proteinExistence type="inferred from homology"/>
<name>DCD_MARN8</name>
<protein>
    <recommendedName>
        <fullName evidence="1">dCTP deaminase</fullName>
        <ecNumber evidence="1">3.5.4.13</ecNumber>
    </recommendedName>
    <alternativeName>
        <fullName evidence="1">Deoxycytidine triphosphate deaminase</fullName>
    </alternativeName>
</protein>
<organism>
    <name type="scientific">Marinobacter nauticus (strain ATCC 700491 / DSM 11845 / VT8)</name>
    <name type="common">Marinobacter aquaeolei</name>
    <dbReference type="NCBI Taxonomy" id="351348"/>
    <lineage>
        <taxon>Bacteria</taxon>
        <taxon>Pseudomonadati</taxon>
        <taxon>Pseudomonadota</taxon>
        <taxon>Gammaproteobacteria</taxon>
        <taxon>Pseudomonadales</taxon>
        <taxon>Marinobacteraceae</taxon>
        <taxon>Marinobacter</taxon>
    </lineage>
</organism>
<sequence length="188" mass="21199">MSIKSDKWIRRMSEQHGMIEPFEAGQVRESEKGRVISYGTSSYGYDVRCSNEFKIFTNVHSATVDPKNFDENSFVNYTGDVCIIPPNSFALARTVEYFRIPRSVLTICLGKSTYARCGIIVNVTPLEPEWEGQVTLEFSNTTNLPAKIYANEGVAQMLFFESDEICETSYKDRGGKYLGQTGVTLPRT</sequence>
<gene>
    <name evidence="1" type="primary">dcd</name>
    <name type="ordered locus">Maqu_0941</name>
</gene>
<accession>A1TZ68</accession>
<feature type="chain" id="PRO_1000009750" description="dCTP deaminase">
    <location>
        <begin position="1"/>
        <end position="188"/>
    </location>
</feature>
<feature type="active site" description="Proton donor/acceptor" evidence="1">
    <location>
        <position position="137"/>
    </location>
</feature>
<feature type="binding site" evidence="1">
    <location>
        <begin position="111"/>
        <end position="116"/>
    </location>
    <ligand>
        <name>dCTP</name>
        <dbReference type="ChEBI" id="CHEBI:61481"/>
    </ligand>
</feature>
<feature type="binding site" evidence="1">
    <location>
        <begin position="135"/>
        <end position="137"/>
    </location>
    <ligand>
        <name>dCTP</name>
        <dbReference type="ChEBI" id="CHEBI:61481"/>
    </ligand>
</feature>
<feature type="binding site" evidence="1">
    <location>
        <position position="156"/>
    </location>
    <ligand>
        <name>dCTP</name>
        <dbReference type="ChEBI" id="CHEBI:61481"/>
    </ligand>
</feature>
<feature type="binding site" evidence="1">
    <location>
        <position position="170"/>
    </location>
    <ligand>
        <name>dCTP</name>
        <dbReference type="ChEBI" id="CHEBI:61481"/>
    </ligand>
</feature>
<feature type="binding site" evidence="1">
    <location>
        <position position="180"/>
    </location>
    <ligand>
        <name>dCTP</name>
        <dbReference type="ChEBI" id="CHEBI:61481"/>
    </ligand>
</feature>
<keyword id="KW-0378">Hydrolase</keyword>
<keyword id="KW-0546">Nucleotide metabolism</keyword>
<keyword id="KW-0547">Nucleotide-binding</keyword>
<evidence type="ECO:0000255" key="1">
    <source>
        <dbReference type="HAMAP-Rule" id="MF_00146"/>
    </source>
</evidence>
<reference key="1">
    <citation type="journal article" date="2011" name="Appl. Environ. Microbiol.">
        <title>Genomic potential of Marinobacter aquaeolei, a biogeochemical 'opportunitroph'.</title>
        <authorList>
            <person name="Singer E."/>
            <person name="Webb E.A."/>
            <person name="Nelson W.C."/>
            <person name="Heidelberg J.F."/>
            <person name="Ivanova N."/>
            <person name="Pati A."/>
            <person name="Edwards K.J."/>
        </authorList>
    </citation>
    <scope>NUCLEOTIDE SEQUENCE [LARGE SCALE GENOMIC DNA]</scope>
    <source>
        <strain>ATCC 700491 / DSM 11845 / VT8</strain>
    </source>
</reference>
<comment type="function">
    <text evidence="1">Catalyzes the deamination of dCTP to dUTP.</text>
</comment>
<comment type="catalytic activity">
    <reaction evidence="1">
        <text>dCTP + H2O + H(+) = dUTP + NH4(+)</text>
        <dbReference type="Rhea" id="RHEA:22680"/>
        <dbReference type="ChEBI" id="CHEBI:15377"/>
        <dbReference type="ChEBI" id="CHEBI:15378"/>
        <dbReference type="ChEBI" id="CHEBI:28938"/>
        <dbReference type="ChEBI" id="CHEBI:61481"/>
        <dbReference type="ChEBI" id="CHEBI:61555"/>
        <dbReference type="EC" id="3.5.4.13"/>
    </reaction>
</comment>
<comment type="pathway">
    <text evidence="1">Pyrimidine metabolism; dUMP biosynthesis; dUMP from dCTP (dUTP route): step 1/2.</text>
</comment>
<comment type="subunit">
    <text evidence="1">Homotrimer.</text>
</comment>
<comment type="similarity">
    <text evidence="1">Belongs to the dCTP deaminase family.</text>
</comment>